<organism>
    <name type="scientific">Escherichia coli (strain UTI89 / UPEC)</name>
    <dbReference type="NCBI Taxonomy" id="364106"/>
    <lineage>
        <taxon>Bacteria</taxon>
        <taxon>Pseudomonadati</taxon>
        <taxon>Pseudomonadota</taxon>
        <taxon>Gammaproteobacteria</taxon>
        <taxon>Enterobacterales</taxon>
        <taxon>Enterobacteriaceae</taxon>
        <taxon>Escherichia</taxon>
    </lineage>
</organism>
<dbReference type="EC" id="4.2.1.20" evidence="1"/>
<dbReference type="EMBL" id="CP000243">
    <property type="protein sequence ID" value="ABE07008.1"/>
    <property type="molecule type" value="Genomic_DNA"/>
</dbReference>
<dbReference type="RefSeq" id="WP_000209529.1">
    <property type="nucleotide sequence ID" value="NZ_CP064825.1"/>
</dbReference>
<dbReference type="SMR" id="Q1RCA6"/>
<dbReference type="KEGG" id="eci:UTI89_C1530"/>
<dbReference type="HOGENOM" id="CLU_016734_3_1_6"/>
<dbReference type="UniPathway" id="UPA00035">
    <property type="reaction ID" value="UER00044"/>
</dbReference>
<dbReference type="Proteomes" id="UP000001952">
    <property type="component" value="Chromosome"/>
</dbReference>
<dbReference type="GO" id="GO:0005737">
    <property type="term" value="C:cytoplasm"/>
    <property type="evidence" value="ECO:0007669"/>
    <property type="project" value="TreeGrafter"/>
</dbReference>
<dbReference type="GO" id="GO:0004834">
    <property type="term" value="F:tryptophan synthase activity"/>
    <property type="evidence" value="ECO:0007669"/>
    <property type="project" value="UniProtKB-UniRule"/>
</dbReference>
<dbReference type="CDD" id="cd06446">
    <property type="entry name" value="Trp-synth_B"/>
    <property type="match status" value="1"/>
</dbReference>
<dbReference type="FunFam" id="3.40.50.1100:FF:000001">
    <property type="entry name" value="Tryptophan synthase beta chain"/>
    <property type="match status" value="1"/>
</dbReference>
<dbReference type="FunFam" id="3.40.50.1100:FF:000004">
    <property type="entry name" value="Tryptophan synthase beta chain"/>
    <property type="match status" value="1"/>
</dbReference>
<dbReference type="Gene3D" id="3.40.50.1100">
    <property type="match status" value="2"/>
</dbReference>
<dbReference type="HAMAP" id="MF_00133">
    <property type="entry name" value="Trp_synth_beta"/>
    <property type="match status" value="1"/>
</dbReference>
<dbReference type="InterPro" id="IPR006653">
    <property type="entry name" value="Trp_synth_b_CS"/>
</dbReference>
<dbReference type="InterPro" id="IPR006654">
    <property type="entry name" value="Trp_synth_beta"/>
</dbReference>
<dbReference type="InterPro" id="IPR023026">
    <property type="entry name" value="Trp_synth_beta/beta-like"/>
</dbReference>
<dbReference type="InterPro" id="IPR001926">
    <property type="entry name" value="TrpB-like_PALP"/>
</dbReference>
<dbReference type="InterPro" id="IPR036052">
    <property type="entry name" value="TrpB-like_PALP_sf"/>
</dbReference>
<dbReference type="NCBIfam" id="TIGR00263">
    <property type="entry name" value="trpB"/>
    <property type="match status" value="1"/>
</dbReference>
<dbReference type="PANTHER" id="PTHR48077:SF3">
    <property type="entry name" value="TRYPTOPHAN SYNTHASE"/>
    <property type="match status" value="1"/>
</dbReference>
<dbReference type="PANTHER" id="PTHR48077">
    <property type="entry name" value="TRYPTOPHAN SYNTHASE-RELATED"/>
    <property type="match status" value="1"/>
</dbReference>
<dbReference type="Pfam" id="PF00291">
    <property type="entry name" value="PALP"/>
    <property type="match status" value="1"/>
</dbReference>
<dbReference type="PIRSF" id="PIRSF001413">
    <property type="entry name" value="Trp_syn_beta"/>
    <property type="match status" value="1"/>
</dbReference>
<dbReference type="SUPFAM" id="SSF53686">
    <property type="entry name" value="Tryptophan synthase beta subunit-like PLP-dependent enzymes"/>
    <property type="match status" value="1"/>
</dbReference>
<dbReference type="PROSITE" id="PS00168">
    <property type="entry name" value="TRP_SYNTHASE_BETA"/>
    <property type="match status" value="1"/>
</dbReference>
<comment type="function">
    <text evidence="1">The beta subunit is responsible for the synthesis of L-tryptophan from indole and L-serine.</text>
</comment>
<comment type="catalytic activity">
    <reaction evidence="1">
        <text>(1S,2R)-1-C-(indol-3-yl)glycerol 3-phosphate + L-serine = D-glyceraldehyde 3-phosphate + L-tryptophan + H2O</text>
        <dbReference type="Rhea" id="RHEA:10532"/>
        <dbReference type="ChEBI" id="CHEBI:15377"/>
        <dbReference type="ChEBI" id="CHEBI:33384"/>
        <dbReference type="ChEBI" id="CHEBI:57912"/>
        <dbReference type="ChEBI" id="CHEBI:58866"/>
        <dbReference type="ChEBI" id="CHEBI:59776"/>
        <dbReference type="EC" id="4.2.1.20"/>
    </reaction>
</comment>
<comment type="cofactor">
    <cofactor evidence="1">
        <name>pyridoxal 5'-phosphate</name>
        <dbReference type="ChEBI" id="CHEBI:597326"/>
    </cofactor>
</comment>
<comment type="pathway">
    <text evidence="1">Amino-acid biosynthesis; L-tryptophan biosynthesis; L-tryptophan from chorismate: step 5/5.</text>
</comment>
<comment type="subunit">
    <text evidence="1">Tetramer of two alpha and two beta chains.</text>
</comment>
<comment type="similarity">
    <text evidence="1">Belongs to the TrpB family.</text>
</comment>
<protein>
    <recommendedName>
        <fullName evidence="1">Tryptophan synthase beta chain</fullName>
        <ecNumber evidence="1">4.2.1.20</ecNumber>
    </recommendedName>
</protein>
<keyword id="KW-0028">Amino-acid biosynthesis</keyword>
<keyword id="KW-0057">Aromatic amino acid biosynthesis</keyword>
<keyword id="KW-0456">Lyase</keyword>
<keyword id="KW-0663">Pyridoxal phosphate</keyword>
<keyword id="KW-0822">Tryptophan biosynthesis</keyword>
<feature type="chain" id="PRO_1000018337" description="Tryptophan synthase beta chain">
    <location>
        <begin position="1"/>
        <end position="397"/>
    </location>
</feature>
<feature type="modified residue" description="N6-(pyridoxal phosphate)lysine" evidence="1">
    <location>
        <position position="87"/>
    </location>
</feature>
<proteinExistence type="inferred from homology"/>
<gene>
    <name evidence="1" type="primary">trpB</name>
    <name type="ordered locus">UTI89_C1530</name>
</gene>
<evidence type="ECO:0000255" key="1">
    <source>
        <dbReference type="HAMAP-Rule" id="MF_00133"/>
    </source>
</evidence>
<accession>Q1RCA6</accession>
<name>TRPB_ECOUT</name>
<sequence>MTTLLNPYFGEFGGMYVPQILMPALRQLEEAFVSAQKDPEFQAQFNDLLKNYAGRPTALTKCQNITAGTNTTLYLKREDLLHGGAHKTNQVLGQALLAKRMGKTKIIAETGAGQHGVASALASALLGLKCRIYMGAKDVERQSPNVFRMRLMGAEVIPVHSGSATLKDACNEALRDWSGSYETAHYMLGTAAGPHPYPTIVREFQRMIGEETKAQILEREGRLPDAVIACVGGGSNAIGMFADFINETDVGLIGVEPGGHGIETGEHGAPLKHGRVGIYFGMKAPMMQTEDGQIEESYSISAGLDFPSVGPQHAYLNSTGRADYVSITDDEALEAFKTLCLHEGIIPALESSHALAHALKMMRENPEKEQLLVVNLSGRGDKDIFTVHDILKARGEI</sequence>
<reference key="1">
    <citation type="journal article" date="2006" name="Proc. Natl. Acad. Sci. U.S.A.">
        <title>Identification of genes subject to positive selection in uropathogenic strains of Escherichia coli: a comparative genomics approach.</title>
        <authorList>
            <person name="Chen S.L."/>
            <person name="Hung C.-S."/>
            <person name="Xu J."/>
            <person name="Reigstad C.S."/>
            <person name="Magrini V."/>
            <person name="Sabo A."/>
            <person name="Blasiar D."/>
            <person name="Bieri T."/>
            <person name="Meyer R.R."/>
            <person name="Ozersky P."/>
            <person name="Armstrong J.R."/>
            <person name="Fulton R.S."/>
            <person name="Latreille J.P."/>
            <person name="Spieth J."/>
            <person name="Hooton T.M."/>
            <person name="Mardis E.R."/>
            <person name="Hultgren S.J."/>
            <person name="Gordon J.I."/>
        </authorList>
    </citation>
    <scope>NUCLEOTIDE SEQUENCE [LARGE SCALE GENOMIC DNA]</scope>
    <source>
        <strain>UTI89 / UPEC</strain>
    </source>
</reference>